<dbReference type="EMBL" id="CP001403">
    <property type="protein sequence ID" value="ACP45661.1"/>
    <property type="molecule type" value="Genomic_DNA"/>
</dbReference>
<dbReference type="RefSeq" id="WP_012711397.1">
    <property type="nucleotide sequence ID" value="NC_012622.1"/>
</dbReference>
<dbReference type="SMR" id="C3NEC2"/>
<dbReference type="KEGG" id="siy:YG5714_1394"/>
<dbReference type="HOGENOM" id="CLU_080796_1_0_2"/>
<dbReference type="Proteomes" id="UP000002308">
    <property type="component" value="Chromosome"/>
</dbReference>
<dbReference type="GO" id="GO:0022625">
    <property type="term" value="C:cytosolic large ribosomal subunit"/>
    <property type="evidence" value="ECO:0007669"/>
    <property type="project" value="TreeGrafter"/>
</dbReference>
<dbReference type="GO" id="GO:0003723">
    <property type="term" value="F:RNA binding"/>
    <property type="evidence" value="ECO:0007669"/>
    <property type="project" value="TreeGrafter"/>
</dbReference>
<dbReference type="GO" id="GO:0003735">
    <property type="term" value="F:structural constituent of ribosome"/>
    <property type="evidence" value="ECO:0007669"/>
    <property type="project" value="InterPro"/>
</dbReference>
<dbReference type="GO" id="GO:0002181">
    <property type="term" value="P:cytoplasmic translation"/>
    <property type="evidence" value="ECO:0007669"/>
    <property type="project" value="TreeGrafter"/>
</dbReference>
<dbReference type="FunFam" id="3.40.1120.10:FF:000002">
    <property type="entry name" value="50S ribosomal protein L15e"/>
    <property type="match status" value="1"/>
</dbReference>
<dbReference type="Gene3D" id="3.40.1120.10">
    <property type="entry name" value="Ribosomal protein l15e"/>
    <property type="match status" value="1"/>
</dbReference>
<dbReference type="HAMAP" id="MF_00256">
    <property type="entry name" value="Ribosomal_eL15"/>
    <property type="match status" value="1"/>
</dbReference>
<dbReference type="InterPro" id="IPR024794">
    <property type="entry name" value="Rbsml_eL15_core_dom_sf"/>
</dbReference>
<dbReference type="InterPro" id="IPR000439">
    <property type="entry name" value="Ribosomal_eL15"/>
</dbReference>
<dbReference type="InterPro" id="IPR020926">
    <property type="entry name" value="Ribosomal_eL15_arc"/>
</dbReference>
<dbReference type="InterPro" id="IPR020925">
    <property type="entry name" value="Ribosomal_eL15_CS"/>
</dbReference>
<dbReference type="InterPro" id="IPR012678">
    <property type="entry name" value="Ribosomal_uL23/eL15/eS24_sf"/>
</dbReference>
<dbReference type="NCBIfam" id="NF003269">
    <property type="entry name" value="PRK04243.1"/>
    <property type="match status" value="1"/>
</dbReference>
<dbReference type="PANTHER" id="PTHR11847:SF4">
    <property type="entry name" value="LARGE RIBOSOMAL SUBUNIT PROTEIN EL15"/>
    <property type="match status" value="1"/>
</dbReference>
<dbReference type="PANTHER" id="PTHR11847">
    <property type="entry name" value="RIBOSOMAL PROTEIN L15"/>
    <property type="match status" value="1"/>
</dbReference>
<dbReference type="Pfam" id="PF00827">
    <property type="entry name" value="Ribosomal_L15e"/>
    <property type="match status" value="1"/>
</dbReference>
<dbReference type="SMART" id="SM01384">
    <property type="entry name" value="Ribosomal_L15e"/>
    <property type="match status" value="1"/>
</dbReference>
<dbReference type="SUPFAM" id="SSF54189">
    <property type="entry name" value="Ribosomal proteins S24e, L23 and L15e"/>
    <property type="match status" value="1"/>
</dbReference>
<dbReference type="PROSITE" id="PS01194">
    <property type="entry name" value="RIBOSOMAL_L15E"/>
    <property type="match status" value="1"/>
</dbReference>
<protein>
    <recommendedName>
        <fullName evidence="1">Large ribosomal subunit protein eL15</fullName>
    </recommendedName>
    <alternativeName>
        <fullName evidence="3">50S ribosomal protein L15e</fullName>
    </alternativeName>
</protein>
<name>RL15E_SACI7</name>
<comment type="similarity">
    <text evidence="1">Belongs to the eukaryotic ribosomal protein eL15 family.</text>
</comment>
<organism>
    <name type="scientific">Saccharolobus islandicus (strain Y.G.57.14 / Yellowstone #1)</name>
    <name type="common">Sulfolobus islandicus</name>
    <dbReference type="NCBI Taxonomy" id="439386"/>
    <lineage>
        <taxon>Archaea</taxon>
        <taxon>Thermoproteota</taxon>
        <taxon>Thermoprotei</taxon>
        <taxon>Sulfolobales</taxon>
        <taxon>Sulfolobaceae</taxon>
        <taxon>Saccharolobus</taxon>
    </lineage>
</organism>
<evidence type="ECO:0000255" key="1">
    <source>
        <dbReference type="HAMAP-Rule" id="MF_00256"/>
    </source>
</evidence>
<evidence type="ECO:0000256" key="2">
    <source>
        <dbReference type="SAM" id="MobiDB-lite"/>
    </source>
</evidence>
<evidence type="ECO:0000305" key="3"/>
<feature type="chain" id="PRO_1000204619" description="Large ribosomal subunit protein eL15">
    <location>
        <begin position="1"/>
        <end position="216"/>
    </location>
</feature>
<feature type="region of interest" description="Disordered" evidence="2">
    <location>
        <begin position="170"/>
        <end position="201"/>
    </location>
</feature>
<feature type="compositionally biased region" description="Basic residues" evidence="2">
    <location>
        <begin position="170"/>
        <end position="188"/>
    </location>
</feature>
<feature type="compositionally biased region" description="Basic and acidic residues" evidence="2">
    <location>
        <begin position="189"/>
        <end position="201"/>
    </location>
</feature>
<gene>
    <name evidence="1" type="primary">rpl15e</name>
    <name type="ordered locus">YG5714_1394</name>
</gene>
<accession>C3NEC2</accession>
<keyword id="KW-0687">Ribonucleoprotein</keyword>
<keyword id="KW-0689">Ribosomal protein</keyword>
<sequence>MTLSVYHYIENTWNSEEWKKGVLRQRFIEWRKEPSIVRLAKPTRLNRARSLGYKAKQGFVIVRVRVRRGGLNKPRPNKGRRPKRMGVYGYGPAKGYKWIAEERAARKYPNLEVLGSYYVGEDGLYKYYEIIMVDPSHPVIKNDPNYKWLQDPSNRNRVFRGLTSAGKKARGLRKSKGFKGTVKHKWSRKQKEREEKKRHEASKYYRLQRYDKIPGK</sequence>
<proteinExistence type="inferred from homology"/>
<reference key="1">
    <citation type="journal article" date="2009" name="Proc. Natl. Acad. Sci. U.S.A.">
        <title>Biogeography of the Sulfolobus islandicus pan-genome.</title>
        <authorList>
            <person name="Reno M.L."/>
            <person name="Held N.L."/>
            <person name="Fields C.J."/>
            <person name="Burke P.V."/>
            <person name="Whitaker R.J."/>
        </authorList>
    </citation>
    <scope>NUCLEOTIDE SEQUENCE [LARGE SCALE GENOMIC DNA]</scope>
    <source>
        <strain>Y.G.57.14 / Yellowstone #1</strain>
    </source>
</reference>